<proteinExistence type="evidence at protein level"/>
<sequence>MLKRSSLIYLSCVLIITIPILLHVYNGPGLSHEANEHRASHKQKRTLANPDKPKSENDEDLFCAVTNPVTGSYIDLSQLSSTPNKLREGQKQISGNNKHESSKTKWSVRGWGYDTNFTLGICSSPVGEAESQQLSNLTGAFYVDQLNENNLVSIGDFSTRPALVGGSTAKKLTLKYENGSMCPNGKDKKATLLNFVCDKEIQSKAQISYIGNLHNCSYFFEVRSIHACPTSNKKNEVNVLGIFIGIFAIFFLVEFAGRRWIYAKLNRHLKNDDELHDISPSLNEQPHWDLIEDGSRWSKFFNGIIKTTRRFTKSLMRSLVRGRNSRQGGIRLRSSPSASSSSLANREFFRDMEAQNEIIDSLDINSHTTESDHPTLADNSV</sequence>
<protein>
    <recommendedName>
        <fullName>Mannose 6-phosphate receptor-like protein 1</fullName>
    </recommendedName>
</protein>
<accession>Q06815</accession>
<accession>D6W481</accession>
<evidence type="ECO:0000255" key="1"/>
<evidence type="ECO:0000255" key="2">
    <source>
        <dbReference type="PROSITE-ProRule" id="PRU01262"/>
    </source>
</evidence>
<evidence type="ECO:0000256" key="3">
    <source>
        <dbReference type="SAM" id="MobiDB-lite"/>
    </source>
</evidence>
<evidence type="ECO:0000269" key="4">
    <source>
    </source>
</evidence>
<evidence type="ECO:0000305" key="5"/>
<evidence type="ECO:0007744" key="6">
    <source>
    </source>
</evidence>
<evidence type="ECO:0007744" key="7">
    <source>
    </source>
</evidence>
<comment type="function">
    <text evidence="4">Sorting receptor involved in the transport of vacuolar enzymes from the Golgi complex to the vacuole. Involved in the delivery and maturation of PEP4 (vacuolar proteinase A) and PRB1 (vacuolar proteinase B).</text>
</comment>
<comment type="subcellular location">
    <subcellularLocation>
        <location>Golgi apparatus</location>
        <location>trans-Golgi network membrane</location>
        <topology>Single-pass type I membrane protein</topology>
    </subcellularLocation>
    <subcellularLocation>
        <location>Endosome membrane</location>
        <topology>Single-pass type I membrane protein</topology>
    </subcellularLocation>
</comment>
<comment type="similarity">
    <text evidence="5">Belongs to the MRL1/IGF2R family.</text>
</comment>
<dbReference type="EMBL" id="U51033">
    <property type="protein sequence ID" value="AAB68128.1"/>
    <property type="molecule type" value="Genomic_DNA"/>
</dbReference>
<dbReference type="EMBL" id="BK006949">
    <property type="protein sequence ID" value="DAA11497.1"/>
    <property type="molecule type" value="Genomic_DNA"/>
</dbReference>
<dbReference type="PIR" id="S69065">
    <property type="entry name" value="S69065"/>
</dbReference>
<dbReference type="RefSeq" id="NP_015404.1">
    <property type="nucleotide sequence ID" value="NM_001184176.1"/>
</dbReference>
<dbReference type="SMR" id="Q06815"/>
<dbReference type="BioGRID" id="36250">
    <property type="interactions" value="173"/>
</dbReference>
<dbReference type="DIP" id="DIP-2873N"/>
<dbReference type="FunCoup" id="Q06815">
    <property type="interactions" value="289"/>
</dbReference>
<dbReference type="IntAct" id="Q06815">
    <property type="interactions" value="15"/>
</dbReference>
<dbReference type="MINT" id="Q06815"/>
<dbReference type="STRING" id="4932.YPR079W"/>
<dbReference type="GlyCosmos" id="Q06815">
    <property type="glycosylation" value="4 sites, No reported glycans"/>
</dbReference>
<dbReference type="GlyGen" id="Q06815">
    <property type="glycosylation" value="4 sites"/>
</dbReference>
<dbReference type="iPTMnet" id="Q06815"/>
<dbReference type="PaxDb" id="4932-YPR079W"/>
<dbReference type="PeptideAtlas" id="Q06815"/>
<dbReference type="TopDownProteomics" id="Q06815"/>
<dbReference type="EnsemblFungi" id="YPR079W_mRNA">
    <property type="protein sequence ID" value="YPR079W"/>
    <property type="gene ID" value="YPR079W"/>
</dbReference>
<dbReference type="GeneID" id="856194"/>
<dbReference type="KEGG" id="sce:YPR079W"/>
<dbReference type="AGR" id="SGD:S000006283"/>
<dbReference type="SGD" id="S000006283">
    <property type="gene designation" value="MRL1"/>
</dbReference>
<dbReference type="VEuPathDB" id="FungiDB:YPR079W"/>
<dbReference type="eggNOG" id="KOG4504">
    <property type="taxonomic scope" value="Eukaryota"/>
</dbReference>
<dbReference type="HOGENOM" id="CLU_053195_0_0_1"/>
<dbReference type="InParanoid" id="Q06815"/>
<dbReference type="OMA" id="SHKSNDV"/>
<dbReference type="OrthoDB" id="4504960at2759"/>
<dbReference type="BioCyc" id="YEAST:G3O-34223-MONOMER"/>
<dbReference type="Reactome" id="R-SCE-8856825">
    <property type="pathway name" value="Cargo recognition for clathrin-mediated endocytosis"/>
</dbReference>
<dbReference type="BioGRID-ORCS" id="856194">
    <property type="hits" value="0 hits in 10 CRISPR screens"/>
</dbReference>
<dbReference type="PRO" id="PR:Q06815"/>
<dbReference type="Proteomes" id="UP000002311">
    <property type="component" value="Chromosome XVI"/>
</dbReference>
<dbReference type="RNAct" id="Q06815">
    <property type="molecule type" value="protein"/>
</dbReference>
<dbReference type="GO" id="GO:0005737">
    <property type="term" value="C:cytoplasm"/>
    <property type="evidence" value="ECO:0007005"/>
    <property type="project" value="SGD"/>
</dbReference>
<dbReference type="GO" id="GO:0010008">
    <property type="term" value="C:endosome membrane"/>
    <property type="evidence" value="ECO:0007669"/>
    <property type="project" value="UniProtKB-SubCell"/>
</dbReference>
<dbReference type="GO" id="GO:0005794">
    <property type="term" value="C:Golgi apparatus"/>
    <property type="evidence" value="ECO:0007669"/>
    <property type="project" value="UniProtKB-SubCell"/>
</dbReference>
<dbReference type="GO" id="GO:0005770">
    <property type="term" value="C:late endosome"/>
    <property type="evidence" value="ECO:0000314"/>
    <property type="project" value="SGD"/>
</dbReference>
<dbReference type="GO" id="GO:0005048">
    <property type="term" value="F:signal sequence binding"/>
    <property type="evidence" value="ECO:0000316"/>
    <property type="project" value="SGD"/>
</dbReference>
<dbReference type="GO" id="GO:0015031">
    <property type="term" value="P:protein transport"/>
    <property type="evidence" value="ECO:0007669"/>
    <property type="project" value="UniProtKB-KW"/>
</dbReference>
<dbReference type="GO" id="GO:0007034">
    <property type="term" value="P:vacuolar transport"/>
    <property type="evidence" value="ECO:0000315"/>
    <property type="project" value="SGD"/>
</dbReference>
<dbReference type="FunFam" id="2.70.130.10:FF:000024">
    <property type="entry name" value="Putative vacuolar sorting receptor"/>
    <property type="match status" value="1"/>
</dbReference>
<dbReference type="Gene3D" id="2.70.130.10">
    <property type="entry name" value="Mannose-6-phosphate receptor binding domain"/>
    <property type="match status" value="1"/>
</dbReference>
<dbReference type="InterPro" id="IPR009011">
    <property type="entry name" value="Man6P_isomerase_rcpt-bd_dom_sf"/>
</dbReference>
<dbReference type="InterPro" id="IPR044865">
    <property type="entry name" value="MRH_dom"/>
</dbReference>
<dbReference type="InterPro" id="IPR036607">
    <property type="entry name" value="PRKCSH"/>
</dbReference>
<dbReference type="PANTHER" id="PTHR15071:SF0">
    <property type="entry name" value="MANNOSE 6-PHOSPHATE RECEPTOR-LIKE PROTEIN 1"/>
    <property type="match status" value="1"/>
</dbReference>
<dbReference type="PANTHER" id="PTHR15071">
    <property type="entry name" value="MANNOSE-6-PHOSPHATE RECEPTOR FAMILY MEMBER"/>
    <property type="match status" value="1"/>
</dbReference>
<dbReference type="Pfam" id="PF13015">
    <property type="entry name" value="PRKCSH_1"/>
    <property type="match status" value="1"/>
</dbReference>
<dbReference type="SUPFAM" id="SSF50911">
    <property type="entry name" value="Mannose 6-phosphate receptor domain"/>
    <property type="match status" value="1"/>
</dbReference>
<dbReference type="PROSITE" id="PS51914">
    <property type="entry name" value="MRH"/>
    <property type="match status" value="1"/>
</dbReference>
<reference key="1">
    <citation type="journal article" date="1997" name="Nature">
        <title>The nucleotide sequence of Saccharomyces cerevisiae chromosome XVI.</title>
        <authorList>
            <person name="Bussey H."/>
            <person name="Storms R.K."/>
            <person name="Ahmed A."/>
            <person name="Albermann K."/>
            <person name="Allen E."/>
            <person name="Ansorge W."/>
            <person name="Araujo R."/>
            <person name="Aparicio A."/>
            <person name="Barrell B.G."/>
            <person name="Badcock K."/>
            <person name="Benes V."/>
            <person name="Botstein D."/>
            <person name="Bowman S."/>
            <person name="Brueckner M."/>
            <person name="Carpenter J."/>
            <person name="Cherry J.M."/>
            <person name="Chung E."/>
            <person name="Churcher C.M."/>
            <person name="Coster F."/>
            <person name="Davis K."/>
            <person name="Davis R.W."/>
            <person name="Dietrich F.S."/>
            <person name="Delius H."/>
            <person name="DiPaolo T."/>
            <person name="Dubois E."/>
            <person name="Duesterhoeft A."/>
            <person name="Duncan M."/>
            <person name="Floeth M."/>
            <person name="Fortin N."/>
            <person name="Friesen J.D."/>
            <person name="Fritz C."/>
            <person name="Goffeau A."/>
            <person name="Hall J."/>
            <person name="Hebling U."/>
            <person name="Heumann K."/>
            <person name="Hilbert H."/>
            <person name="Hillier L.W."/>
            <person name="Hunicke-Smith S."/>
            <person name="Hyman R.W."/>
            <person name="Johnston M."/>
            <person name="Kalman S."/>
            <person name="Kleine K."/>
            <person name="Komp C."/>
            <person name="Kurdi O."/>
            <person name="Lashkari D."/>
            <person name="Lew H."/>
            <person name="Lin A."/>
            <person name="Lin D."/>
            <person name="Louis E.J."/>
            <person name="Marathe R."/>
            <person name="Messenguy F."/>
            <person name="Mewes H.-W."/>
            <person name="Mirtipati S."/>
            <person name="Moestl D."/>
            <person name="Mueller-Auer S."/>
            <person name="Namath A."/>
            <person name="Nentwich U."/>
            <person name="Oefner P."/>
            <person name="Pearson D."/>
            <person name="Petel F.X."/>
            <person name="Pohl T.M."/>
            <person name="Purnelle B."/>
            <person name="Rajandream M.A."/>
            <person name="Rechmann S."/>
            <person name="Rieger M."/>
            <person name="Riles L."/>
            <person name="Roberts D."/>
            <person name="Schaefer M."/>
            <person name="Scharfe M."/>
            <person name="Scherens B."/>
            <person name="Schramm S."/>
            <person name="Schroeder M."/>
            <person name="Sdicu A.-M."/>
            <person name="Tettelin H."/>
            <person name="Urrestarazu L.A."/>
            <person name="Ushinsky S."/>
            <person name="Vierendeels F."/>
            <person name="Vissers S."/>
            <person name="Voss H."/>
            <person name="Walsh S.V."/>
            <person name="Wambutt R."/>
            <person name="Wang Y."/>
            <person name="Wedler E."/>
            <person name="Wedler H."/>
            <person name="Winnett E."/>
            <person name="Zhong W.-W."/>
            <person name="Zollner A."/>
            <person name="Vo D.H."/>
            <person name="Hani J."/>
        </authorList>
    </citation>
    <scope>NUCLEOTIDE SEQUENCE [LARGE SCALE GENOMIC DNA]</scope>
    <source>
        <strain>ATCC 204508 / S288c</strain>
    </source>
</reference>
<reference key="2">
    <citation type="journal article" date="2014" name="G3 (Bethesda)">
        <title>The reference genome sequence of Saccharomyces cerevisiae: Then and now.</title>
        <authorList>
            <person name="Engel S.R."/>
            <person name="Dietrich F.S."/>
            <person name="Fisk D.G."/>
            <person name="Binkley G."/>
            <person name="Balakrishnan R."/>
            <person name="Costanzo M.C."/>
            <person name="Dwight S.S."/>
            <person name="Hitz B.C."/>
            <person name="Karra K."/>
            <person name="Nash R.S."/>
            <person name="Weng S."/>
            <person name="Wong E.D."/>
            <person name="Lloyd P."/>
            <person name="Skrzypek M.S."/>
            <person name="Miyasato S.R."/>
            <person name="Simison M."/>
            <person name="Cherry J.M."/>
        </authorList>
    </citation>
    <scope>GENOME REANNOTATION</scope>
    <source>
        <strain>ATCC 204508 / S288c</strain>
    </source>
</reference>
<reference key="3">
    <citation type="journal article" date="2001" name="Curr. Biol.">
        <title>A yeast homolog of the mammalian mannose 6-phosphate receptors contributes to the sorting of vacuolar hydrolases.</title>
        <authorList>
            <person name="Whyte J.R."/>
            <person name="Munro S."/>
        </authorList>
    </citation>
    <scope>FUNCTION</scope>
    <scope>SUBCELLULAR LOCATION</scope>
</reference>
<reference key="4">
    <citation type="journal article" date="2003" name="Nature">
        <title>Global analysis of protein localization in budding yeast.</title>
        <authorList>
            <person name="Huh W.-K."/>
            <person name="Falvo J.V."/>
            <person name="Gerke L.C."/>
            <person name="Carroll A.S."/>
            <person name="Howson R.W."/>
            <person name="Weissman J.S."/>
            <person name="O'Shea E.K."/>
        </authorList>
    </citation>
    <scope>SUBCELLULAR LOCATION [LARGE SCALE ANALYSIS]</scope>
</reference>
<reference key="5">
    <citation type="journal article" date="2007" name="J. Proteome Res.">
        <title>Large-scale phosphorylation analysis of alpha-factor-arrested Saccharomyces cerevisiae.</title>
        <authorList>
            <person name="Li X."/>
            <person name="Gerber S.A."/>
            <person name="Rudner A.D."/>
            <person name="Beausoleil S.A."/>
            <person name="Haas W."/>
            <person name="Villen J."/>
            <person name="Elias J.E."/>
            <person name="Gygi S.P."/>
        </authorList>
    </citation>
    <scope>PHOSPHORYLATION [LARGE SCALE ANALYSIS] AT SER-335; SER-339 AND SER-342</scope>
    <scope>IDENTIFICATION BY MASS SPECTROMETRY [LARGE SCALE ANALYSIS]</scope>
    <source>
        <strain>ADR376</strain>
    </source>
</reference>
<reference key="6">
    <citation type="journal article" date="2008" name="Mol. Cell. Proteomics">
        <title>A multidimensional chromatography technology for in-depth phosphoproteome analysis.</title>
        <authorList>
            <person name="Albuquerque C.P."/>
            <person name="Smolka M.B."/>
            <person name="Payne S.H."/>
            <person name="Bafna V."/>
            <person name="Eng J."/>
            <person name="Zhou H."/>
        </authorList>
    </citation>
    <scope>PHOSPHORYLATION [LARGE SCALE ANALYSIS] AT SER-371 AND SER-380</scope>
    <scope>IDENTIFICATION BY MASS SPECTROMETRY [LARGE SCALE ANALYSIS]</scope>
</reference>
<reference key="7">
    <citation type="journal article" date="2009" name="Science">
        <title>Global analysis of Cdk1 substrate phosphorylation sites provides insights into evolution.</title>
        <authorList>
            <person name="Holt L.J."/>
            <person name="Tuch B.B."/>
            <person name="Villen J."/>
            <person name="Johnson A.D."/>
            <person name="Gygi S.P."/>
            <person name="Morgan D.O."/>
        </authorList>
    </citation>
    <scope>IDENTIFICATION BY MASS SPECTROMETRY [LARGE SCALE ANALYSIS]</scope>
</reference>
<name>MRL1_YEAST</name>
<organism>
    <name type="scientific">Saccharomyces cerevisiae (strain ATCC 204508 / S288c)</name>
    <name type="common">Baker's yeast</name>
    <dbReference type="NCBI Taxonomy" id="559292"/>
    <lineage>
        <taxon>Eukaryota</taxon>
        <taxon>Fungi</taxon>
        <taxon>Dikarya</taxon>
        <taxon>Ascomycota</taxon>
        <taxon>Saccharomycotina</taxon>
        <taxon>Saccharomycetes</taxon>
        <taxon>Saccharomycetales</taxon>
        <taxon>Saccharomycetaceae</taxon>
        <taxon>Saccharomyces</taxon>
    </lineage>
</organism>
<keyword id="KW-1015">Disulfide bond</keyword>
<keyword id="KW-0967">Endosome</keyword>
<keyword id="KW-0325">Glycoprotein</keyword>
<keyword id="KW-0333">Golgi apparatus</keyword>
<keyword id="KW-0472">Membrane</keyword>
<keyword id="KW-0597">Phosphoprotein</keyword>
<keyword id="KW-0653">Protein transport</keyword>
<keyword id="KW-1185">Reference proteome</keyword>
<keyword id="KW-0732">Signal</keyword>
<keyword id="KW-0812">Transmembrane</keyword>
<keyword id="KW-1133">Transmembrane helix</keyword>
<keyword id="KW-0813">Transport</keyword>
<feature type="signal peptide" evidence="1">
    <location>
        <begin position="1"/>
        <end position="23"/>
    </location>
</feature>
<feature type="chain" id="PRO_0000042715" description="Mannose 6-phosphate receptor-like protein 1">
    <location>
        <begin position="24"/>
        <end position="381"/>
    </location>
</feature>
<feature type="topological domain" description="Lumenal" evidence="1">
    <location>
        <begin position="24"/>
        <end position="236"/>
    </location>
</feature>
<feature type="transmembrane region" description="Helical" evidence="1">
    <location>
        <begin position="237"/>
        <end position="257"/>
    </location>
</feature>
<feature type="topological domain" description="Cytoplasmic" evidence="1">
    <location>
        <begin position="258"/>
        <end position="381"/>
    </location>
</feature>
<feature type="domain" description="MRH" evidence="2">
    <location>
        <begin position="61"/>
        <end position="230"/>
    </location>
</feature>
<feature type="region of interest" description="Disordered" evidence="3">
    <location>
        <begin position="33"/>
        <end position="57"/>
    </location>
</feature>
<feature type="region of interest" description="Disordered" evidence="3">
    <location>
        <begin position="81"/>
        <end position="104"/>
    </location>
</feature>
<feature type="region of interest" description="Disordered" evidence="3">
    <location>
        <begin position="360"/>
        <end position="381"/>
    </location>
</feature>
<feature type="modified residue" description="Phosphoserine" evidence="6">
    <location>
        <position position="335"/>
    </location>
</feature>
<feature type="modified residue" description="Phosphoserine" evidence="6">
    <location>
        <position position="339"/>
    </location>
</feature>
<feature type="modified residue" description="Phosphoserine" evidence="6">
    <location>
        <position position="342"/>
    </location>
</feature>
<feature type="modified residue" description="Phosphoserine" evidence="7">
    <location>
        <position position="371"/>
    </location>
</feature>
<feature type="modified residue" description="Phosphoserine" evidence="7">
    <location>
        <position position="380"/>
    </location>
</feature>
<feature type="glycosylation site" description="N-linked (GlcNAc...) asparagine" evidence="1">
    <location>
        <position position="116"/>
    </location>
</feature>
<feature type="glycosylation site" description="N-linked (GlcNAc...) asparagine" evidence="1">
    <location>
        <position position="136"/>
    </location>
</feature>
<feature type="glycosylation site" description="N-linked (GlcNAc...) asparagine" evidence="1">
    <location>
        <position position="178"/>
    </location>
</feature>
<feature type="glycosylation site" description="N-linked (GlcNAc...) asparagine" evidence="1">
    <location>
        <position position="215"/>
    </location>
</feature>
<feature type="disulfide bond" evidence="2">
    <location>
        <begin position="63"/>
        <end position="122"/>
    </location>
</feature>
<feature type="disulfide bond" evidence="2">
    <location>
        <begin position="182"/>
        <end position="216"/>
    </location>
</feature>
<feature type="disulfide bond" evidence="2">
    <location>
        <begin position="197"/>
        <end position="228"/>
    </location>
</feature>
<gene>
    <name type="primary">MRL1</name>
    <name type="ordered locus">YPR079W</name>
</gene>